<protein>
    <recommendedName>
        <fullName>ATP phosphoribosyltransferase regulatory subunit</fullName>
    </recommendedName>
</protein>
<feature type="chain" id="PRO_0000171021" description="ATP phosphoribosyltransferase regulatory subunit">
    <location>
        <begin position="1"/>
        <end position="383"/>
    </location>
</feature>
<evidence type="ECO:0000250" key="1"/>
<evidence type="ECO:0000305" key="2"/>
<gene>
    <name type="primary">hisZ</name>
    <name type="synonym">hisS2</name>
    <name type="ordered locus">aq_1155</name>
</gene>
<sequence>MKTSLISGERFYSLEESNLVKEIFKKAVKIFEAFGYDYINLSHFEPYEFQELTFGEGSKEAITFKDSYTKESFGLRLDFTTQVVRTISHLRNVKLPERVYYFGKVFSLDRRGFEKLQTGVELIGEKSILADFEVIQVLTEFLKSLGLKDLKVILSHAGIVRKVADEREELLRAFSERNLEALKEVLGNDIKFFVEVSKNPEVLNFLEKYDLEKEKEELLELGKLLEEFGIDYAYDLGEVRNFPYYTGVIFEIYELKSGKALAGGGRYDNLSKIYGKEYPATGGAVYLERLLDILPKNVEKKDYFVIDKTKKRLGLKLADVLREKGKKVGMEIVKERGLEHSLIYAFDKGFKEVLLVEDEIVKVYTTPKDYVVMKIREFLDLIE</sequence>
<dbReference type="EMBL" id="AE000657">
    <property type="protein sequence ID" value="AAC07188.1"/>
    <property type="molecule type" value="Genomic_DNA"/>
</dbReference>
<dbReference type="PIR" id="D70399">
    <property type="entry name" value="D70399"/>
</dbReference>
<dbReference type="RefSeq" id="NP_213787.1">
    <property type="nucleotide sequence ID" value="NC_000918.1"/>
</dbReference>
<dbReference type="RefSeq" id="WP_010880725.1">
    <property type="nucleotide sequence ID" value="NC_000918.1"/>
</dbReference>
<dbReference type="SMR" id="O67223"/>
<dbReference type="STRING" id="224324.aq_1155"/>
<dbReference type="EnsemblBacteria" id="AAC07188">
    <property type="protein sequence ID" value="AAC07188"/>
    <property type="gene ID" value="aq_1155"/>
</dbReference>
<dbReference type="KEGG" id="aae:aq_1155"/>
<dbReference type="eggNOG" id="COG3705">
    <property type="taxonomic scope" value="Bacteria"/>
</dbReference>
<dbReference type="HOGENOM" id="CLU_025113_0_2_0"/>
<dbReference type="InParanoid" id="O67223"/>
<dbReference type="OrthoDB" id="9800814at2"/>
<dbReference type="UniPathway" id="UPA00031">
    <property type="reaction ID" value="UER00006"/>
</dbReference>
<dbReference type="Proteomes" id="UP000000798">
    <property type="component" value="Chromosome"/>
</dbReference>
<dbReference type="GO" id="GO:0005737">
    <property type="term" value="C:cytoplasm"/>
    <property type="evidence" value="ECO:0007669"/>
    <property type="project" value="UniProtKB-SubCell"/>
</dbReference>
<dbReference type="GO" id="GO:0004821">
    <property type="term" value="F:histidine-tRNA ligase activity"/>
    <property type="evidence" value="ECO:0000318"/>
    <property type="project" value="GO_Central"/>
</dbReference>
<dbReference type="GO" id="GO:0006427">
    <property type="term" value="P:histidyl-tRNA aminoacylation"/>
    <property type="evidence" value="ECO:0000318"/>
    <property type="project" value="GO_Central"/>
</dbReference>
<dbReference type="GO" id="GO:0000105">
    <property type="term" value="P:L-histidine biosynthetic process"/>
    <property type="evidence" value="ECO:0007669"/>
    <property type="project" value="UniProtKB-UniRule"/>
</dbReference>
<dbReference type="CDD" id="cd00773">
    <property type="entry name" value="HisRS-like_core"/>
    <property type="match status" value="1"/>
</dbReference>
<dbReference type="Gene3D" id="3.30.930.10">
    <property type="entry name" value="Bira Bifunctional Protein, Domain 2"/>
    <property type="match status" value="1"/>
</dbReference>
<dbReference type="HAMAP" id="MF_00125">
    <property type="entry name" value="HisZ"/>
    <property type="match status" value="1"/>
</dbReference>
<dbReference type="InterPro" id="IPR045864">
    <property type="entry name" value="aa-tRNA-synth_II/BPL/LPL"/>
</dbReference>
<dbReference type="InterPro" id="IPR041715">
    <property type="entry name" value="HisRS-like_core"/>
</dbReference>
<dbReference type="InterPro" id="IPR004516">
    <property type="entry name" value="HisRS/HisZ"/>
</dbReference>
<dbReference type="InterPro" id="IPR004517">
    <property type="entry name" value="HisZ"/>
</dbReference>
<dbReference type="PANTHER" id="PTHR43707:SF1">
    <property type="entry name" value="HISTIDINE--TRNA LIGASE, MITOCHONDRIAL-RELATED"/>
    <property type="match status" value="1"/>
</dbReference>
<dbReference type="PANTHER" id="PTHR43707">
    <property type="entry name" value="HISTIDYL-TRNA SYNTHETASE"/>
    <property type="match status" value="1"/>
</dbReference>
<dbReference type="Pfam" id="PF13393">
    <property type="entry name" value="tRNA-synt_His"/>
    <property type="match status" value="1"/>
</dbReference>
<dbReference type="PIRSF" id="PIRSF001549">
    <property type="entry name" value="His-tRNA_synth"/>
    <property type="match status" value="1"/>
</dbReference>
<dbReference type="SUPFAM" id="SSF55681">
    <property type="entry name" value="Class II aaRS and biotin synthetases"/>
    <property type="match status" value="1"/>
</dbReference>
<keyword id="KW-0028">Amino-acid biosynthesis</keyword>
<keyword id="KW-0963">Cytoplasm</keyword>
<keyword id="KW-0368">Histidine biosynthesis</keyword>
<keyword id="KW-1185">Reference proteome</keyword>
<accession>O67223</accession>
<comment type="function">
    <text evidence="1">Required for the first step of histidine biosynthesis. May allow the feedback regulation of ATP phosphoribosyltransferase activity by histidine (By similarity).</text>
</comment>
<comment type="pathway">
    <text>Amino-acid biosynthesis; L-histidine biosynthesis; L-histidine from 5-phospho-alpha-D-ribose 1-diphosphate: step 1/9.</text>
</comment>
<comment type="subunit">
    <text evidence="1">Heteromultimer composed of HisG and HisZ subunits.</text>
</comment>
<comment type="subcellular location">
    <subcellularLocation>
        <location evidence="1">Cytoplasm</location>
    </subcellularLocation>
</comment>
<comment type="miscellaneous">
    <text>This function is generally fulfilled by the C-terminal part of HisG, which is missing in some bacteria such as this one.</text>
</comment>
<comment type="similarity">
    <text evidence="2">Belongs to the class-II aminoacyl-tRNA synthetase family. HisZ subfamily.</text>
</comment>
<proteinExistence type="inferred from homology"/>
<organism>
    <name type="scientific">Aquifex aeolicus (strain VF5)</name>
    <dbReference type="NCBI Taxonomy" id="224324"/>
    <lineage>
        <taxon>Bacteria</taxon>
        <taxon>Pseudomonadati</taxon>
        <taxon>Aquificota</taxon>
        <taxon>Aquificia</taxon>
        <taxon>Aquificales</taxon>
        <taxon>Aquificaceae</taxon>
        <taxon>Aquifex</taxon>
    </lineage>
</organism>
<name>HISZ_AQUAE</name>
<reference key="1">
    <citation type="journal article" date="1998" name="Nature">
        <title>The complete genome of the hyperthermophilic bacterium Aquifex aeolicus.</title>
        <authorList>
            <person name="Deckert G."/>
            <person name="Warren P.V."/>
            <person name="Gaasterland T."/>
            <person name="Young W.G."/>
            <person name="Lenox A.L."/>
            <person name="Graham D.E."/>
            <person name="Overbeek R."/>
            <person name="Snead M.A."/>
            <person name="Keller M."/>
            <person name="Aujay M."/>
            <person name="Huber R."/>
            <person name="Feldman R.A."/>
            <person name="Short J.M."/>
            <person name="Olsen G.J."/>
            <person name="Swanson R.V."/>
        </authorList>
    </citation>
    <scope>NUCLEOTIDE SEQUENCE [LARGE SCALE GENOMIC DNA]</scope>
    <source>
        <strain>VF5</strain>
    </source>
</reference>